<dbReference type="EMBL" id="CP000034">
    <property type="protein sequence ID" value="ABB62925.1"/>
    <property type="molecule type" value="Genomic_DNA"/>
</dbReference>
<dbReference type="RefSeq" id="WP_000140518.1">
    <property type="nucleotide sequence ID" value="NC_007606.1"/>
</dbReference>
<dbReference type="RefSeq" id="YP_404416.1">
    <property type="nucleotide sequence ID" value="NC_007606.1"/>
</dbReference>
<dbReference type="SMR" id="Q32CN0"/>
<dbReference type="STRING" id="300267.SDY_2894"/>
<dbReference type="EnsemblBacteria" id="ABB62925">
    <property type="protein sequence ID" value="ABB62925"/>
    <property type="gene ID" value="SDY_2894"/>
</dbReference>
<dbReference type="KEGG" id="sdy:SDY_2894"/>
<dbReference type="PATRIC" id="fig|300267.13.peg.3477"/>
<dbReference type="HOGENOM" id="CLU_066607_3_2_6"/>
<dbReference type="Proteomes" id="UP000002716">
    <property type="component" value="Chromosome"/>
</dbReference>
<dbReference type="GO" id="GO:0005737">
    <property type="term" value="C:cytoplasm"/>
    <property type="evidence" value="ECO:0007669"/>
    <property type="project" value="UniProtKB-SubCell"/>
</dbReference>
<dbReference type="GO" id="GO:0006282">
    <property type="term" value="P:regulation of DNA repair"/>
    <property type="evidence" value="ECO:0007669"/>
    <property type="project" value="UniProtKB-UniRule"/>
</dbReference>
<dbReference type="FunFam" id="1.10.10.10:FF:000133">
    <property type="entry name" value="Regulatory protein RecX"/>
    <property type="match status" value="1"/>
</dbReference>
<dbReference type="FunFam" id="1.10.10.10:FF:000134">
    <property type="entry name" value="Regulatory protein RecX"/>
    <property type="match status" value="1"/>
</dbReference>
<dbReference type="FunFam" id="1.10.10.10:FF:000209">
    <property type="entry name" value="Regulatory protein RecX"/>
    <property type="match status" value="1"/>
</dbReference>
<dbReference type="Gene3D" id="1.10.10.10">
    <property type="entry name" value="Winged helix-like DNA-binding domain superfamily/Winged helix DNA-binding domain"/>
    <property type="match status" value="3"/>
</dbReference>
<dbReference type="HAMAP" id="MF_01114">
    <property type="entry name" value="RecX"/>
    <property type="match status" value="1"/>
</dbReference>
<dbReference type="InterPro" id="IPR053926">
    <property type="entry name" value="RecX_HTH_1st"/>
</dbReference>
<dbReference type="InterPro" id="IPR053924">
    <property type="entry name" value="RecX_HTH_2nd"/>
</dbReference>
<dbReference type="InterPro" id="IPR053925">
    <property type="entry name" value="RecX_HTH_3rd"/>
</dbReference>
<dbReference type="InterPro" id="IPR003783">
    <property type="entry name" value="Regulatory_RecX"/>
</dbReference>
<dbReference type="InterPro" id="IPR036388">
    <property type="entry name" value="WH-like_DNA-bd_sf"/>
</dbReference>
<dbReference type="NCBIfam" id="NF001052">
    <property type="entry name" value="PRK00117.1-1"/>
    <property type="match status" value="1"/>
</dbReference>
<dbReference type="PANTHER" id="PTHR33602">
    <property type="entry name" value="REGULATORY PROTEIN RECX FAMILY PROTEIN"/>
    <property type="match status" value="1"/>
</dbReference>
<dbReference type="PANTHER" id="PTHR33602:SF1">
    <property type="entry name" value="REGULATORY PROTEIN RECX FAMILY PROTEIN"/>
    <property type="match status" value="1"/>
</dbReference>
<dbReference type="Pfam" id="PF21982">
    <property type="entry name" value="RecX_HTH1"/>
    <property type="match status" value="1"/>
</dbReference>
<dbReference type="Pfam" id="PF02631">
    <property type="entry name" value="RecX_HTH2"/>
    <property type="match status" value="1"/>
</dbReference>
<dbReference type="Pfam" id="PF21981">
    <property type="entry name" value="RecX_HTH3"/>
    <property type="match status" value="1"/>
</dbReference>
<proteinExistence type="inferred from homology"/>
<organism>
    <name type="scientific">Shigella dysenteriae serotype 1 (strain Sd197)</name>
    <dbReference type="NCBI Taxonomy" id="300267"/>
    <lineage>
        <taxon>Bacteria</taxon>
        <taxon>Pseudomonadati</taxon>
        <taxon>Pseudomonadota</taxon>
        <taxon>Gammaproteobacteria</taxon>
        <taxon>Enterobacterales</taxon>
        <taxon>Enterobacteriaceae</taxon>
        <taxon>Shigella</taxon>
    </lineage>
</organism>
<protein>
    <recommendedName>
        <fullName evidence="1">Regulatory protein RecX</fullName>
    </recommendedName>
</protein>
<name>RECX_SHIDS</name>
<sequence>MTESTSRRPAYARLLDRAVRILAVRDHSEQELRRKLVAPIMGKNGPEEIDATAEDYERVIAWCHEHGYLDDSRFVARFIASRSRKGYGPARIRQELNQKGISREATEKAMRECDIDWCALARDHATRKYDEPLPTVFSEKVKIQRFLLYRGYLMEDIQDIWRNFAD</sequence>
<feature type="chain" id="PRO_1000065204" description="Regulatory protein RecX">
    <location>
        <begin position="1"/>
        <end position="166"/>
    </location>
</feature>
<accession>Q32CN0</accession>
<comment type="function">
    <text evidence="1">Modulates RecA activity.</text>
</comment>
<comment type="subcellular location">
    <subcellularLocation>
        <location evidence="1">Cytoplasm</location>
    </subcellularLocation>
</comment>
<comment type="similarity">
    <text evidence="1">Belongs to the RecX family.</text>
</comment>
<reference key="1">
    <citation type="journal article" date="2005" name="Nucleic Acids Res.">
        <title>Genome dynamics and diversity of Shigella species, the etiologic agents of bacillary dysentery.</title>
        <authorList>
            <person name="Yang F."/>
            <person name="Yang J."/>
            <person name="Zhang X."/>
            <person name="Chen L."/>
            <person name="Jiang Y."/>
            <person name="Yan Y."/>
            <person name="Tang X."/>
            <person name="Wang J."/>
            <person name="Xiong Z."/>
            <person name="Dong J."/>
            <person name="Xue Y."/>
            <person name="Zhu Y."/>
            <person name="Xu X."/>
            <person name="Sun L."/>
            <person name="Chen S."/>
            <person name="Nie H."/>
            <person name="Peng J."/>
            <person name="Xu J."/>
            <person name="Wang Y."/>
            <person name="Yuan Z."/>
            <person name="Wen Y."/>
            <person name="Yao Z."/>
            <person name="Shen Y."/>
            <person name="Qiang B."/>
            <person name="Hou Y."/>
            <person name="Yu J."/>
            <person name="Jin Q."/>
        </authorList>
    </citation>
    <scope>NUCLEOTIDE SEQUENCE [LARGE SCALE GENOMIC DNA]</scope>
    <source>
        <strain>Sd197</strain>
    </source>
</reference>
<keyword id="KW-0963">Cytoplasm</keyword>
<keyword id="KW-1185">Reference proteome</keyword>
<evidence type="ECO:0000255" key="1">
    <source>
        <dbReference type="HAMAP-Rule" id="MF_01114"/>
    </source>
</evidence>
<gene>
    <name evidence="1" type="primary">recX</name>
    <name type="ordered locus">SDY_2894</name>
</gene>